<dbReference type="EMBL" id="AF321240">
    <property type="protein sequence ID" value="AAK26294.1"/>
    <property type="molecule type" value="mRNA"/>
</dbReference>
<dbReference type="EMBL" id="AF248053">
    <property type="protein sequence ID" value="AAK31911.1"/>
    <property type="molecule type" value="mRNA"/>
</dbReference>
<dbReference type="EMBL" id="AL137188">
    <property type="protein sequence ID" value="CAB69822.2"/>
    <property type="molecule type" value="mRNA"/>
</dbReference>
<dbReference type="EMBL" id="AK290961">
    <property type="protein sequence ID" value="BAF83650.1"/>
    <property type="molecule type" value="mRNA"/>
</dbReference>
<dbReference type="EMBL" id="AL031055">
    <property type="status" value="NOT_ANNOTATED_CDS"/>
    <property type="molecule type" value="Genomic_DNA"/>
</dbReference>
<dbReference type="EMBL" id="CH471077">
    <property type="protein sequence ID" value="EAW75724.1"/>
    <property type="molecule type" value="Genomic_DNA"/>
</dbReference>
<dbReference type="EMBL" id="BC101657">
    <property type="protein sequence ID" value="AAI01658.1"/>
    <property type="molecule type" value="mRNA"/>
</dbReference>
<dbReference type="EMBL" id="BC113423">
    <property type="protein sequence ID" value="AAI13424.1"/>
    <property type="molecule type" value="mRNA"/>
</dbReference>
<dbReference type="CCDS" id="CCDS13402.1"/>
<dbReference type="RefSeq" id="NP_110404.1">
    <property type="nucleotide sequence ID" value="NM_030777.4"/>
</dbReference>
<dbReference type="SMR" id="O95528"/>
<dbReference type="BioGRID" id="123350">
    <property type="interactions" value="8"/>
</dbReference>
<dbReference type="FunCoup" id="O95528">
    <property type="interactions" value="133"/>
</dbReference>
<dbReference type="IntAct" id="O95528">
    <property type="interactions" value="1"/>
</dbReference>
<dbReference type="STRING" id="9606.ENSP00000352216"/>
<dbReference type="DrugBank" id="DB01914">
    <property type="generic name" value="D-glucose"/>
</dbReference>
<dbReference type="DrugBank" id="DB09341">
    <property type="generic name" value="Dextrose, unspecified form"/>
</dbReference>
<dbReference type="DrugBank" id="DB09502">
    <property type="generic name" value="Fludeoxyglucose (18F)"/>
</dbReference>
<dbReference type="TCDB" id="2.A.1.1.59">
    <property type="family name" value="the major facilitator superfamily (mfs)"/>
</dbReference>
<dbReference type="GlyCosmos" id="O95528">
    <property type="glycosylation" value="1 site, No reported glycans"/>
</dbReference>
<dbReference type="GlyGen" id="O95528">
    <property type="glycosylation" value="1 site"/>
</dbReference>
<dbReference type="iPTMnet" id="O95528"/>
<dbReference type="PhosphoSitePlus" id="O95528"/>
<dbReference type="SwissPalm" id="O95528"/>
<dbReference type="BioMuta" id="SLC2A10"/>
<dbReference type="jPOST" id="O95528"/>
<dbReference type="MassIVE" id="O95528"/>
<dbReference type="PaxDb" id="9606-ENSP00000352216"/>
<dbReference type="PeptideAtlas" id="O95528"/>
<dbReference type="ProteomicsDB" id="50935"/>
<dbReference type="Antibodypedia" id="13253">
    <property type="antibodies" value="163 antibodies from 28 providers"/>
</dbReference>
<dbReference type="DNASU" id="81031"/>
<dbReference type="Ensembl" id="ENST00000359271.4">
    <property type="protein sequence ID" value="ENSP00000352216.2"/>
    <property type="gene ID" value="ENSG00000197496.6"/>
</dbReference>
<dbReference type="GeneID" id="81031"/>
<dbReference type="KEGG" id="hsa:81031"/>
<dbReference type="MANE-Select" id="ENST00000359271.4">
    <property type="protein sequence ID" value="ENSP00000352216.2"/>
    <property type="RefSeq nucleotide sequence ID" value="NM_030777.4"/>
    <property type="RefSeq protein sequence ID" value="NP_110404.1"/>
</dbReference>
<dbReference type="UCSC" id="uc002xsl.4">
    <property type="organism name" value="human"/>
</dbReference>
<dbReference type="AGR" id="HGNC:13444"/>
<dbReference type="CTD" id="81031"/>
<dbReference type="DisGeNET" id="81031"/>
<dbReference type="GeneCards" id="SLC2A10"/>
<dbReference type="GeneReviews" id="SLC2A10"/>
<dbReference type="HGNC" id="HGNC:13444">
    <property type="gene designation" value="SLC2A10"/>
</dbReference>
<dbReference type="HPA" id="ENSG00000197496">
    <property type="expression patterns" value="Low tissue specificity"/>
</dbReference>
<dbReference type="MalaCards" id="SLC2A10"/>
<dbReference type="MIM" id="208050">
    <property type="type" value="phenotype"/>
</dbReference>
<dbReference type="MIM" id="606145">
    <property type="type" value="gene"/>
</dbReference>
<dbReference type="neXtProt" id="NX_O95528"/>
<dbReference type="OpenTargets" id="ENSG00000197496"/>
<dbReference type="Orphanet" id="3342">
    <property type="disease" value="Arterial tortuosity syndrome"/>
</dbReference>
<dbReference type="PharmGKB" id="PA37769"/>
<dbReference type="VEuPathDB" id="HostDB:ENSG00000197496"/>
<dbReference type="eggNOG" id="KOG0254">
    <property type="taxonomic scope" value="Eukaryota"/>
</dbReference>
<dbReference type="GeneTree" id="ENSGT00940000159430"/>
<dbReference type="HOGENOM" id="CLU_001265_30_5_1"/>
<dbReference type="InParanoid" id="O95528"/>
<dbReference type="OMA" id="GCYRIPV"/>
<dbReference type="OrthoDB" id="4142200at2759"/>
<dbReference type="PAN-GO" id="O95528">
    <property type="GO annotations" value="5 GO annotations based on evolutionary models"/>
</dbReference>
<dbReference type="PhylomeDB" id="O95528"/>
<dbReference type="TreeFam" id="TF332408"/>
<dbReference type="PathwayCommons" id="O95528"/>
<dbReference type="Reactome" id="R-HSA-189200">
    <property type="pathway name" value="Cellular hexose transport"/>
</dbReference>
<dbReference type="Reactome" id="R-HSA-5619068">
    <property type="pathway name" value="Defective SLC2A10 causes arterial tortuosity syndrome (ATS)"/>
</dbReference>
<dbReference type="BioGRID-ORCS" id="81031">
    <property type="hits" value="12 hits in 1143 CRISPR screens"/>
</dbReference>
<dbReference type="ChiTaRS" id="SLC2A10">
    <property type="organism name" value="human"/>
</dbReference>
<dbReference type="GeneWiki" id="SLC2A10"/>
<dbReference type="GenomeRNAi" id="81031"/>
<dbReference type="Pharos" id="O95528">
    <property type="development level" value="Tbio"/>
</dbReference>
<dbReference type="PRO" id="PR:O95528"/>
<dbReference type="Proteomes" id="UP000005640">
    <property type="component" value="Chromosome 20"/>
</dbReference>
<dbReference type="RNAct" id="O95528">
    <property type="molecule type" value="protein"/>
</dbReference>
<dbReference type="Bgee" id="ENSG00000197496">
    <property type="expression patterns" value="Expressed in tibia and 159 other cell types or tissues"/>
</dbReference>
<dbReference type="ExpressionAtlas" id="O95528">
    <property type="expression patterns" value="baseline and differential"/>
</dbReference>
<dbReference type="GO" id="GO:0005829">
    <property type="term" value="C:cytosol"/>
    <property type="evidence" value="ECO:0000314"/>
    <property type="project" value="HPA"/>
</dbReference>
<dbReference type="GO" id="GO:0012505">
    <property type="term" value="C:endomembrane system"/>
    <property type="evidence" value="ECO:0007669"/>
    <property type="project" value="UniProtKB-SubCell"/>
</dbReference>
<dbReference type="GO" id="GO:0016020">
    <property type="term" value="C:membrane"/>
    <property type="evidence" value="ECO:0000318"/>
    <property type="project" value="GO_Central"/>
</dbReference>
<dbReference type="GO" id="GO:0048471">
    <property type="term" value="C:perinuclear region of cytoplasm"/>
    <property type="evidence" value="ECO:0000314"/>
    <property type="project" value="ARUK-UCL"/>
</dbReference>
<dbReference type="GO" id="GO:0005886">
    <property type="term" value="C:plasma membrane"/>
    <property type="evidence" value="ECO:0000314"/>
    <property type="project" value="ARUK-UCL"/>
</dbReference>
<dbReference type="GO" id="GO:0005351">
    <property type="term" value="F:carbohydrate:proton symporter activity"/>
    <property type="evidence" value="ECO:0000303"/>
    <property type="project" value="UniProtKB"/>
</dbReference>
<dbReference type="GO" id="GO:0055056">
    <property type="term" value="F:D-glucose transmembrane transporter activity"/>
    <property type="evidence" value="ECO:0000314"/>
    <property type="project" value="ARUK-UCL"/>
</dbReference>
<dbReference type="GO" id="GO:0033300">
    <property type="term" value="F:dehydroascorbic acid transmembrane transporter activity"/>
    <property type="evidence" value="ECO:0000314"/>
    <property type="project" value="ARUK-UCL"/>
</dbReference>
<dbReference type="GO" id="GO:0060840">
    <property type="term" value="P:artery development"/>
    <property type="evidence" value="ECO:0000315"/>
    <property type="project" value="ARUK-UCL"/>
</dbReference>
<dbReference type="GO" id="GO:0045454">
    <property type="term" value="P:cell redox homeostasis"/>
    <property type="evidence" value="ECO:0000315"/>
    <property type="project" value="ARUK-UCL"/>
</dbReference>
<dbReference type="GO" id="GO:0072359">
    <property type="term" value="P:circulatory system development"/>
    <property type="evidence" value="ECO:0000318"/>
    <property type="project" value="GO_Central"/>
</dbReference>
<dbReference type="GO" id="GO:0098708">
    <property type="term" value="P:D-glucose import across plasma membrane"/>
    <property type="evidence" value="ECO:0000314"/>
    <property type="project" value="ARUK-UCL"/>
</dbReference>
<dbReference type="GO" id="GO:1904659">
    <property type="term" value="P:D-glucose transmembrane transport"/>
    <property type="evidence" value="ECO:0000318"/>
    <property type="project" value="GO_Central"/>
</dbReference>
<dbReference type="GO" id="GO:0070837">
    <property type="term" value="P:dehydroascorbic acid transport"/>
    <property type="evidence" value="ECO:0000314"/>
    <property type="project" value="ARUK-UCL"/>
</dbReference>
<dbReference type="GO" id="GO:0072498">
    <property type="term" value="P:embryonic skeletal joint development"/>
    <property type="evidence" value="ECO:0000315"/>
    <property type="project" value="ARUK-UCL"/>
</dbReference>
<dbReference type="GO" id="GO:0015757">
    <property type="term" value="P:galactose transmembrane transport"/>
    <property type="evidence" value="ECO:0000304"/>
    <property type="project" value="ARUK-UCL"/>
</dbReference>
<dbReference type="GO" id="GO:0008645">
    <property type="term" value="P:hexose transmembrane transport"/>
    <property type="evidence" value="ECO:0000304"/>
    <property type="project" value="Reactome"/>
</dbReference>
<dbReference type="GO" id="GO:0032683">
    <property type="term" value="P:negative regulation of connective tissue growth factor production"/>
    <property type="evidence" value="ECO:0000315"/>
    <property type="project" value="ARUK-UCL"/>
</dbReference>
<dbReference type="GO" id="GO:0010629">
    <property type="term" value="P:negative regulation of gene expression"/>
    <property type="evidence" value="ECO:0000315"/>
    <property type="project" value="ARUK-UCL"/>
</dbReference>
<dbReference type="GO" id="GO:2001045">
    <property type="term" value="P:negative regulation of integrin-mediated signaling pathway"/>
    <property type="evidence" value="ECO:0000315"/>
    <property type="project" value="ARUK-UCL"/>
</dbReference>
<dbReference type="GO" id="GO:1902729">
    <property type="term" value="P:negative regulation of proteoglycan biosynthetic process"/>
    <property type="evidence" value="ECO:0000315"/>
    <property type="project" value="ARUK-UCL"/>
</dbReference>
<dbReference type="GO" id="GO:0030512">
    <property type="term" value="P:negative regulation of transforming growth factor beta receptor signaling pathway"/>
    <property type="evidence" value="ECO:0000315"/>
    <property type="project" value="ARUK-UCL"/>
</dbReference>
<dbReference type="GO" id="GO:0010628">
    <property type="term" value="P:positive regulation of gene expression"/>
    <property type="evidence" value="ECO:0000315"/>
    <property type="project" value="ARUK-UCL"/>
</dbReference>
<dbReference type="GO" id="GO:1902730">
    <property type="term" value="P:positive regulation of proteoglycan biosynthetic process"/>
    <property type="evidence" value="ECO:0000315"/>
    <property type="project" value="ARUK-UCL"/>
</dbReference>
<dbReference type="GO" id="GO:0030511">
    <property type="term" value="P:positive regulation of transforming growth factor beta receptor signaling pathway"/>
    <property type="evidence" value="ECO:0000315"/>
    <property type="project" value="ARUK-UCL"/>
</dbReference>
<dbReference type="GO" id="GO:1903053">
    <property type="term" value="P:regulation of extracellular matrix organization"/>
    <property type="evidence" value="ECO:0000315"/>
    <property type="project" value="ARUK-UCL"/>
</dbReference>
<dbReference type="GO" id="GO:0043588">
    <property type="term" value="P:skin development"/>
    <property type="evidence" value="ECO:0000315"/>
    <property type="project" value="ARUK-UCL"/>
</dbReference>
<dbReference type="GO" id="GO:0150104">
    <property type="term" value="P:transport across blood-brain barrier"/>
    <property type="evidence" value="ECO:0000303"/>
    <property type="project" value="ARUK-UCL"/>
</dbReference>
<dbReference type="CDD" id="cd17436">
    <property type="entry name" value="MFS_GLUT10_Class3"/>
    <property type="match status" value="1"/>
</dbReference>
<dbReference type="FunFam" id="1.20.1250.20:FF:000234">
    <property type="entry name" value="Solute carrier family 2 member 10"/>
    <property type="match status" value="1"/>
</dbReference>
<dbReference type="FunFam" id="1.20.1250.20:FF:000164">
    <property type="entry name" value="solute carrier family 2, facilitated glucose transporter member 10"/>
    <property type="match status" value="1"/>
</dbReference>
<dbReference type="FunFam" id="1.20.1250.20:FF:000208">
    <property type="entry name" value="solute carrier family 2, facilitated glucose transporter member 10"/>
    <property type="match status" value="1"/>
</dbReference>
<dbReference type="Gene3D" id="1.20.1250.20">
    <property type="entry name" value="MFS general substrate transporter like domains"/>
    <property type="match status" value="3"/>
</dbReference>
<dbReference type="InterPro" id="IPR020846">
    <property type="entry name" value="MFS_dom"/>
</dbReference>
<dbReference type="InterPro" id="IPR005828">
    <property type="entry name" value="MFS_sugar_transport-like"/>
</dbReference>
<dbReference type="InterPro" id="IPR050820">
    <property type="entry name" value="MFS_Sugar_Transporter"/>
</dbReference>
<dbReference type="InterPro" id="IPR036259">
    <property type="entry name" value="MFS_trans_sf"/>
</dbReference>
<dbReference type="InterPro" id="IPR003663">
    <property type="entry name" value="Sugar/inositol_transpt"/>
</dbReference>
<dbReference type="InterPro" id="IPR005829">
    <property type="entry name" value="Sugar_transporter_CS"/>
</dbReference>
<dbReference type="PANTHER" id="PTHR48023">
    <property type="entry name" value="D-XYLOSE-PROTON SYMPORTER-LIKE 2"/>
    <property type="match status" value="1"/>
</dbReference>
<dbReference type="PANTHER" id="PTHR48023:SF7">
    <property type="entry name" value="SOLUTE CARRIER FAMILY 2, FACILITATED GLUCOSE TRANSPORTER MEMBER 10"/>
    <property type="match status" value="1"/>
</dbReference>
<dbReference type="Pfam" id="PF00083">
    <property type="entry name" value="Sugar_tr"/>
    <property type="match status" value="3"/>
</dbReference>
<dbReference type="PRINTS" id="PR00171">
    <property type="entry name" value="SUGRTRNSPORT"/>
</dbReference>
<dbReference type="SUPFAM" id="SSF103473">
    <property type="entry name" value="MFS general substrate transporter"/>
    <property type="match status" value="1"/>
</dbReference>
<dbReference type="PROSITE" id="PS50850">
    <property type="entry name" value="MFS"/>
    <property type="match status" value="1"/>
</dbReference>
<dbReference type="PROSITE" id="PS00216">
    <property type="entry name" value="SUGAR_TRANSPORT_1"/>
    <property type="match status" value="2"/>
</dbReference>
<comment type="function">
    <text evidence="4 6">Facilitative glucose transporter required for the development of the cardiovascular system.</text>
</comment>
<comment type="catalytic activity">
    <reaction evidence="4">
        <text>D-glucose(out) = D-glucose(in)</text>
        <dbReference type="Rhea" id="RHEA:60376"/>
        <dbReference type="ChEBI" id="CHEBI:4167"/>
    </reaction>
</comment>
<comment type="biophysicochemical properties">
    <kinetics>
        <KM evidence="4">0.28 mM for 2-deoxy-D-glucose</KM>
    </kinetics>
</comment>
<comment type="subcellular location">
    <subcellularLocation>
        <location evidence="6">Endomembrane system</location>
        <topology evidence="2">Multi-pass membrane protein</topology>
    </subcellularLocation>
    <subcellularLocation>
        <location evidence="6">Cytoplasm</location>
        <location evidence="6">Perinuclear region</location>
    </subcellularLocation>
</comment>
<comment type="tissue specificity">
    <text evidence="4">Widely expressed; highest levels in liver and pancreas.</text>
</comment>
<comment type="disease" evidence="6 7">
    <disease id="DI-01190">
        <name>Arterial tortuosity syndrome</name>
        <acronym>ATORS</acronym>
        <description>An autosomal recessive disorder characterized by tortuosity and elongation of major arteries, often resulting in death at young age. Other typical features include aneurysms of large arteries and stenosis of the pulmonary artery, in association with facial features and several connective tissue manifestations such as soft skin and joint laxity. Histopathological findings include fragmentation of elastic fibers in the tunica media of large arteries.</description>
        <dbReference type="MIM" id="208050"/>
    </disease>
    <text>The disease is caused by variants affecting the gene represented in this entry.</text>
</comment>
<comment type="similarity">
    <text evidence="9">Belongs to the major facilitator superfamily. Sugar transporter (TC 2.A.1.1) family. Glucose transporter subfamily.</text>
</comment>
<name>GTR10_HUMAN</name>
<protein>
    <recommendedName>
        <fullName evidence="9">Solute carrier family 2, facilitated glucose transporter member 10</fullName>
    </recommendedName>
    <alternativeName>
        <fullName evidence="8">Glucose transporter type 10</fullName>
        <shortName evidence="8">GLUT-10</shortName>
    </alternativeName>
</protein>
<evidence type="ECO:0000250" key="1">
    <source>
        <dbReference type="UniProtKB" id="P11169"/>
    </source>
</evidence>
<evidence type="ECO:0000255" key="2"/>
<evidence type="ECO:0000256" key="3">
    <source>
        <dbReference type="SAM" id="MobiDB-lite"/>
    </source>
</evidence>
<evidence type="ECO:0000269" key="4">
    <source>
    </source>
</evidence>
<evidence type="ECO:0000269" key="5">
    <source>
    </source>
</evidence>
<evidence type="ECO:0000269" key="6">
    <source>
    </source>
</evidence>
<evidence type="ECO:0000269" key="7">
    <source>
    </source>
</evidence>
<evidence type="ECO:0000303" key="8">
    <source>
    </source>
</evidence>
<evidence type="ECO:0000305" key="9"/>
<evidence type="ECO:0000312" key="10">
    <source>
        <dbReference type="HGNC" id="HGNC:13444"/>
    </source>
</evidence>
<sequence>MGHSPPVLPLCASVSLLGGLTFGYELAVISGALLPLQLDFGLSCLEQEFLVGSLLLGALLASLVGGFLIDCYGRKQAILGSNLVLLAGSLTLGLAGSLAWLVLGRAVVGFAISLSSMACCIYVSELVGPRQRGVLVSLYEAGITVGILLSYALNYALAGTPWGWRHMFGWATAPAVLQSLSLLFLPAGTDETATHKDLIPLQGGEAPKLGPGRPRYSFLDLFRARDNMRGRTTVGLGLVLFQQLTGQPNVLCYASTIFSSVGFHGGSSAVLASVGLGAVKVAATLTAMGLVDRAGRRALLLAGCALMALSVSGIGLVSFAVPMDSGPSCLAVPNATGQTGLPGDSGLLQDSSLPPIPRTNEDQREPILSTAKKTKPHPRSGDPSAPPRLALSSALPGPPLPARGHALLRWTALLCLMVFVSAFSFGFGPVTWLVLSEIYPVEIRGRAFAFCNSFNWAANLFISLSFLDLIGTIGLSWTFLLYGLTAVLGLGFIYLFVPETKGQSLAEIDQQFQKRRFTLSFGHRQNSTGIPYSRIEISAAS</sequence>
<organism>
    <name type="scientific">Homo sapiens</name>
    <name type="common">Human</name>
    <dbReference type="NCBI Taxonomy" id="9606"/>
    <lineage>
        <taxon>Eukaryota</taxon>
        <taxon>Metazoa</taxon>
        <taxon>Chordata</taxon>
        <taxon>Craniata</taxon>
        <taxon>Vertebrata</taxon>
        <taxon>Euteleostomi</taxon>
        <taxon>Mammalia</taxon>
        <taxon>Eutheria</taxon>
        <taxon>Euarchontoglires</taxon>
        <taxon>Primates</taxon>
        <taxon>Haplorrhini</taxon>
        <taxon>Catarrhini</taxon>
        <taxon>Hominidae</taxon>
        <taxon>Homo</taxon>
    </lineage>
</organism>
<feature type="chain" id="PRO_0000050379" description="Solute carrier family 2, facilitated glucose transporter member 10">
    <location>
        <begin position="1"/>
        <end position="541"/>
    </location>
</feature>
<feature type="topological domain" description="Cytoplasmic" evidence="2">
    <location>
        <begin position="1"/>
        <end position="15"/>
    </location>
</feature>
<feature type="transmembrane region" description="Helical; Name=1" evidence="2">
    <location>
        <begin position="16"/>
        <end position="36"/>
    </location>
</feature>
<feature type="topological domain" description="Extracellular" evidence="2">
    <location>
        <begin position="37"/>
        <end position="48"/>
    </location>
</feature>
<feature type="transmembrane region" description="Helical; Name=2" evidence="2">
    <location>
        <begin position="49"/>
        <end position="69"/>
    </location>
</feature>
<feature type="topological domain" description="Cytoplasmic" evidence="2">
    <location>
        <begin position="70"/>
        <end position="77"/>
    </location>
</feature>
<feature type="transmembrane region" description="Helical; Name=3" evidence="2">
    <location>
        <begin position="78"/>
        <end position="98"/>
    </location>
</feature>
<feature type="topological domain" description="Extracellular" evidence="2">
    <location>
        <begin position="99"/>
        <end position="106"/>
    </location>
</feature>
<feature type="transmembrane region" description="Helical; Name=4" evidence="2">
    <location>
        <begin position="107"/>
        <end position="127"/>
    </location>
</feature>
<feature type="topological domain" description="Cytoplasmic" evidence="2">
    <location>
        <begin position="128"/>
        <end position="134"/>
    </location>
</feature>
<feature type="transmembrane region" description="Helical; Name=5" evidence="2">
    <location>
        <begin position="135"/>
        <end position="155"/>
    </location>
</feature>
<feature type="topological domain" description="Extracellular" evidence="2">
    <location>
        <begin position="156"/>
        <end position="166"/>
    </location>
</feature>
<feature type="transmembrane region" description="Helical; Name=6" evidence="2">
    <location>
        <begin position="167"/>
        <end position="187"/>
    </location>
</feature>
<feature type="topological domain" description="Cytoplasmic" evidence="2">
    <location>
        <begin position="188"/>
        <end position="233"/>
    </location>
</feature>
<feature type="transmembrane region" description="Helical; Name=7" evidence="2">
    <location>
        <begin position="234"/>
        <end position="254"/>
    </location>
</feature>
<feature type="topological domain" description="Extracellular" evidence="2">
    <location>
        <begin position="255"/>
        <end position="269"/>
    </location>
</feature>
<feature type="transmembrane region" description="Helical; Name=8" evidence="2">
    <location>
        <begin position="270"/>
        <end position="290"/>
    </location>
</feature>
<feature type="topological domain" description="Cytoplasmic" evidence="2">
    <location>
        <begin position="291"/>
        <end position="298"/>
    </location>
</feature>
<feature type="transmembrane region" description="Helical; Name=9" evidence="2">
    <location>
        <begin position="299"/>
        <end position="319"/>
    </location>
</feature>
<feature type="topological domain" description="Extracellular" evidence="2">
    <location>
        <begin position="320"/>
        <end position="414"/>
    </location>
</feature>
<feature type="transmembrane region" description="Helical; Name=10" evidence="2">
    <location>
        <begin position="415"/>
        <end position="435"/>
    </location>
</feature>
<feature type="topological domain" description="Cytoplasmic" evidence="2">
    <location>
        <begin position="436"/>
        <end position="445"/>
    </location>
</feature>
<feature type="transmembrane region" description="Helical; Name=11" evidence="2">
    <location>
        <begin position="446"/>
        <end position="466"/>
    </location>
</feature>
<feature type="topological domain" description="Extracellular" evidence="2">
    <location>
        <begin position="467"/>
        <end position="476"/>
    </location>
</feature>
<feature type="transmembrane region" description="Helical; Name=12" evidence="2">
    <location>
        <begin position="477"/>
        <end position="497"/>
    </location>
</feature>
<feature type="topological domain" description="Cytoplasmic" evidence="2">
    <location>
        <begin position="498"/>
        <end position="541"/>
    </location>
</feature>
<feature type="region of interest" description="Disordered" evidence="3">
    <location>
        <begin position="340"/>
        <end position="388"/>
    </location>
</feature>
<feature type="binding site" evidence="1">
    <location>
        <begin position="242"/>
        <end position="243"/>
    </location>
    <ligand>
        <name>D-glucose</name>
        <dbReference type="ChEBI" id="CHEBI:4167"/>
    </ligand>
</feature>
<feature type="binding site" evidence="1">
    <location>
        <position position="432"/>
    </location>
    <ligand>
        <name>D-glucose</name>
        <dbReference type="ChEBI" id="CHEBI:4167"/>
    </ligand>
</feature>
<feature type="glycosylation site" description="N-linked (GlcNAc...) asparagine" evidence="2">
    <location>
        <position position="334"/>
    </location>
</feature>
<feature type="sequence variant" id="VAR_029535" description="In ATORS; dbSNP:rs80358230." evidence="6">
    <original>S</original>
    <variation>R</variation>
    <location>
        <position position="81"/>
    </location>
</feature>
<feature type="sequence variant" id="VAR_029536" description="In dbSNP:rs6094438.">
    <original>A</original>
    <variation>S</variation>
    <location>
        <position position="106"/>
    </location>
</feature>
<feature type="sequence variant" id="VAR_042417" description="In ATORS; dbSNP:rs121908173." evidence="7">
    <original>R</original>
    <variation>W</variation>
    <location>
        <position position="132"/>
    </location>
</feature>
<feature type="sequence variant" id="VAR_042418" description="In ATORS; dbSNP:rs864309480." evidence="7">
    <original>G</original>
    <variation>V</variation>
    <location>
        <position position="142"/>
    </location>
</feature>
<feature type="sequence variant" id="VAR_029335" description="Associated with lower insulin level; dbSNP:rs2235491." evidence="5">
    <original>A</original>
    <variation>T</variation>
    <location>
        <position position="206"/>
    </location>
</feature>
<feature type="sequence variant" id="VAR_042419" description="In dbSNP:rs34295241.">
    <original>R</original>
    <variation>H</variation>
    <location>
        <position position="225"/>
    </location>
</feature>
<feature type="sequence variant" id="VAR_042420" description="In ATORS; dbSNP:rs771028960." evidence="7">
    <original>R</original>
    <variation>Q</variation>
    <location>
        <position position="231"/>
    </location>
</feature>
<feature type="sequence variant" id="VAR_042421" description="In ATORS; dbSNP:rs564317065." evidence="7">
    <original>G</original>
    <variation>E</variation>
    <location>
        <position position="246"/>
    </location>
</feature>
<feature type="sequence variant" id="VAR_042422" description="In ATORS; dbSNP:rs121908172." evidence="7">
    <original>G</original>
    <variation>W</variation>
    <location>
        <position position="426"/>
    </location>
</feature>
<feature type="sequence variant" id="VAR_042423" description="In ATORS; dbSNP:rs763220502." evidence="7">
    <original>E</original>
    <variation>K</variation>
    <location>
        <position position="437"/>
    </location>
</feature>
<feature type="sequence variant" id="VAR_042424" description="In ATORS; dbSNP:rs753723351." evidence="7">
    <original>G</original>
    <variation>E</variation>
    <location>
        <position position="445"/>
    </location>
</feature>
<feature type="sequence variant" id="VAR_024652" description="In dbSNP:rs6018008.">
    <original>T</original>
    <variation>A</variation>
    <location>
        <position position="518"/>
    </location>
</feature>
<feature type="sequence variant" id="VAR_029537" description="In dbSNP:rs7348121.">
    <original>I</original>
    <variation>V</variation>
    <location>
        <position position="537"/>
    </location>
</feature>
<accession>O95528</accession>
<accession>A8K4J6</accession>
<accession>Q3MIX5</accession>
<accession>Q9H4I6</accession>
<proteinExistence type="evidence at protein level"/>
<reference key="1">
    <citation type="journal article" date="2001" name="Genomics">
        <title>Molecular cloning of a novel member of the GLUT family of transporters, SLC2A10 (GLUT10), localized on chromosome 20q13.1: a candidate gene for NIDDM susceptibility.</title>
        <authorList>
            <person name="McVie-Wylie A.J."/>
            <person name="Lamson D.R."/>
            <person name="Chen Y.T."/>
        </authorList>
    </citation>
    <scope>NUCLEOTIDE SEQUENCE [MRNA]</scope>
    <source>
        <tissue>Liver</tissue>
    </source>
</reference>
<reference key="2">
    <citation type="journal article" date="2001" name="Mol. Genet. Metab.">
        <title>Sequence and functional analysis of GLUT10: a glucose transporter in the Type 2 diabetes-linked region of chromosome 20q12-13.1.</title>
        <authorList>
            <person name="Dawson P.A."/>
            <person name="Mychaleckyj J.C."/>
            <person name="Fossey S.C."/>
            <person name="Mihic S.J."/>
            <person name="Craddock A.L."/>
            <person name="Bowden D.W."/>
        </authorList>
    </citation>
    <scope>NUCLEOTIDE SEQUENCE [MRNA]</scope>
    <scope>FUNCTION</scope>
    <scope>TRANSPORTER ACTIVITY</scope>
    <scope>BIOPHYSICOCHEMICAL PROPERTIES</scope>
    <scope>TISSUE SPECIFICITY</scope>
</reference>
<reference key="3">
    <citation type="submission" date="2000-01" db="EMBL/GenBank/DDBJ databases">
        <authorList>
            <person name="Stavrides G.S."/>
            <person name="Hashim Y."/>
            <person name="Huckle E.J."/>
            <person name="Deloukas P."/>
        </authorList>
    </citation>
    <scope>NUCLEOTIDE SEQUENCE [MRNA]</scope>
</reference>
<reference key="4">
    <citation type="journal article" date="2004" name="Nat. Genet.">
        <title>Complete sequencing and characterization of 21,243 full-length human cDNAs.</title>
        <authorList>
            <person name="Ota T."/>
            <person name="Suzuki Y."/>
            <person name="Nishikawa T."/>
            <person name="Otsuki T."/>
            <person name="Sugiyama T."/>
            <person name="Irie R."/>
            <person name="Wakamatsu A."/>
            <person name="Hayashi K."/>
            <person name="Sato H."/>
            <person name="Nagai K."/>
            <person name="Kimura K."/>
            <person name="Makita H."/>
            <person name="Sekine M."/>
            <person name="Obayashi M."/>
            <person name="Nishi T."/>
            <person name="Shibahara T."/>
            <person name="Tanaka T."/>
            <person name="Ishii S."/>
            <person name="Yamamoto J."/>
            <person name="Saito K."/>
            <person name="Kawai Y."/>
            <person name="Isono Y."/>
            <person name="Nakamura Y."/>
            <person name="Nagahari K."/>
            <person name="Murakami K."/>
            <person name="Yasuda T."/>
            <person name="Iwayanagi T."/>
            <person name="Wagatsuma M."/>
            <person name="Shiratori A."/>
            <person name="Sudo H."/>
            <person name="Hosoiri T."/>
            <person name="Kaku Y."/>
            <person name="Kodaira H."/>
            <person name="Kondo H."/>
            <person name="Sugawara M."/>
            <person name="Takahashi M."/>
            <person name="Kanda K."/>
            <person name="Yokoi T."/>
            <person name="Furuya T."/>
            <person name="Kikkawa E."/>
            <person name="Omura Y."/>
            <person name="Abe K."/>
            <person name="Kamihara K."/>
            <person name="Katsuta N."/>
            <person name="Sato K."/>
            <person name="Tanikawa M."/>
            <person name="Yamazaki M."/>
            <person name="Ninomiya K."/>
            <person name="Ishibashi T."/>
            <person name="Yamashita H."/>
            <person name="Murakawa K."/>
            <person name="Fujimori K."/>
            <person name="Tanai H."/>
            <person name="Kimata M."/>
            <person name="Watanabe M."/>
            <person name="Hiraoka S."/>
            <person name="Chiba Y."/>
            <person name="Ishida S."/>
            <person name="Ono Y."/>
            <person name="Takiguchi S."/>
            <person name="Watanabe S."/>
            <person name="Yosida M."/>
            <person name="Hotuta T."/>
            <person name="Kusano J."/>
            <person name="Kanehori K."/>
            <person name="Takahashi-Fujii A."/>
            <person name="Hara H."/>
            <person name="Tanase T.-O."/>
            <person name="Nomura Y."/>
            <person name="Togiya S."/>
            <person name="Komai F."/>
            <person name="Hara R."/>
            <person name="Takeuchi K."/>
            <person name="Arita M."/>
            <person name="Imose N."/>
            <person name="Musashino K."/>
            <person name="Yuuki H."/>
            <person name="Oshima A."/>
            <person name="Sasaki N."/>
            <person name="Aotsuka S."/>
            <person name="Yoshikawa Y."/>
            <person name="Matsunawa H."/>
            <person name="Ichihara T."/>
            <person name="Shiohata N."/>
            <person name="Sano S."/>
            <person name="Moriya S."/>
            <person name="Momiyama H."/>
            <person name="Satoh N."/>
            <person name="Takami S."/>
            <person name="Terashima Y."/>
            <person name="Suzuki O."/>
            <person name="Nakagawa S."/>
            <person name="Senoh A."/>
            <person name="Mizoguchi H."/>
            <person name="Goto Y."/>
            <person name="Shimizu F."/>
            <person name="Wakebe H."/>
            <person name="Hishigaki H."/>
            <person name="Watanabe T."/>
            <person name="Sugiyama A."/>
            <person name="Takemoto M."/>
            <person name="Kawakami B."/>
            <person name="Yamazaki M."/>
            <person name="Watanabe K."/>
            <person name="Kumagai A."/>
            <person name="Itakura S."/>
            <person name="Fukuzumi Y."/>
            <person name="Fujimori Y."/>
            <person name="Komiyama M."/>
            <person name="Tashiro H."/>
            <person name="Tanigami A."/>
            <person name="Fujiwara T."/>
            <person name="Ono T."/>
            <person name="Yamada K."/>
            <person name="Fujii Y."/>
            <person name="Ozaki K."/>
            <person name="Hirao M."/>
            <person name="Ohmori Y."/>
            <person name="Kawabata A."/>
            <person name="Hikiji T."/>
            <person name="Kobatake N."/>
            <person name="Inagaki H."/>
            <person name="Ikema Y."/>
            <person name="Okamoto S."/>
            <person name="Okitani R."/>
            <person name="Kawakami T."/>
            <person name="Noguchi S."/>
            <person name="Itoh T."/>
            <person name="Shigeta K."/>
            <person name="Senba T."/>
            <person name="Matsumura K."/>
            <person name="Nakajima Y."/>
            <person name="Mizuno T."/>
            <person name="Morinaga M."/>
            <person name="Sasaki M."/>
            <person name="Togashi T."/>
            <person name="Oyama M."/>
            <person name="Hata H."/>
            <person name="Watanabe M."/>
            <person name="Komatsu T."/>
            <person name="Mizushima-Sugano J."/>
            <person name="Satoh T."/>
            <person name="Shirai Y."/>
            <person name="Takahashi Y."/>
            <person name="Nakagawa K."/>
            <person name="Okumura K."/>
            <person name="Nagase T."/>
            <person name="Nomura N."/>
            <person name="Kikuchi H."/>
            <person name="Masuho Y."/>
            <person name="Yamashita R."/>
            <person name="Nakai K."/>
            <person name="Yada T."/>
            <person name="Nakamura Y."/>
            <person name="Ohara O."/>
            <person name="Isogai T."/>
            <person name="Sugano S."/>
        </authorList>
    </citation>
    <scope>NUCLEOTIDE SEQUENCE [LARGE SCALE MRNA]</scope>
</reference>
<reference key="5">
    <citation type="journal article" date="2001" name="Nature">
        <title>The DNA sequence and comparative analysis of human chromosome 20.</title>
        <authorList>
            <person name="Deloukas P."/>
            <person name="Matthews L.H."/>
            <person name="Ashurst J.L."/>
            <person name="Burton J."/>
            <person name="Gilbert J.G.R."/>
            <person name="Jones M."/>
            <person name="Stavrides G."/>
            <person name="Almeida J.P."/>
            <person name="Babbage A.K."/>
            <person name="Bagguley C.L."/>
            <person name="Bailey J."/>
            <person name="Barlow K.F."/>
            <person name="Bates K.N."/>
            <person name="Beard L.M."/>
            <person name="Beare D.M."/>
            <person name="Beasley O.P."/>
            <person name="Bird C.P."/>
            <person name="Blakey S.E."/>
            <person name="Bridgeman A.M."/>
            <person name="Brown A.J."/>
            <person name="Buck D."/>
            <person name="Burrill W.D."/>
            <person name="Butler A.P."/>
            <person name="Carder C."/>
            <person name="Carter N.P."/>
            <person name="Chapman J.C."/>
            <person name="Clamp M."/>
            <person name="Clark G."/>
            <person name="Clark L.N."/>
            <person name="Clark S.Y."/>
            <person name="Clee C.M."/>
            <person name="Clegg S."/>
            <person name="Cobley V.E."/>
            <person name="Collier R.E."/>
            <person name="Connor R.E."/>
            <person name="Corby N.R."/>
            <person name="Coulson A."/>
            <person name="Coville G.J."/>
            <person name="Deadman R."/>
            <person name="Dhami P.D."/>
            <person name="Dunn M."/>
            <person name="Ellington A.G."/>
            <person name="Frankland J.A."/>
            <person name="Fraser A."/>
            <person name="French L."/>
            <person name="Garner P."/>
            <person name="Grafham D.V."/>
            <person name="Griffiths C."/>
            <person name="Griffiths M.N.D."/>
            <person name="Gwilliam R."/>
            <person name="Hall R.E."/>
            <person name="Hammond S."/>
            <person name="Harley J.L."/>
            <person name="Heath P.D."/>
            <person name="Ho S."/>
            <person name="Holden J.L."/>
            <person name="Howden P.J."/>
            <person name="Huckle E."/>
            <person name="Hunt A.R."/>
            <person name="Hunt S.E."/>
            <person name="Jekosch K."/>
            <person name="Johnson C.M."/>
            <person name="Johnson D."/>
            <person name="Kay M.P."/>
            <person name="Kimberley A.M."/>
            <person name="King A."/>
            <person name="Knights A."/>
            <person name="Laird G.K."/>
            <person name="Lawlor S."/>
            <person name="Lehvaeslaiho M.H."/>
            <person name="Leversha M.A."/>
            <person name="Lloyd C."/>
            <person name="Lloyd D.M."/>
            <person name="Lovell J.D."/>
            <person name="Marsh V.L."/>
            <person name="Martin S.L."/>
            <person name="McConnachie L.J."/>
            <person name="McLay K."/>
            <person name="McMurray A.A."/>
            <person name="Milne S.A."/>
            <person name="Mistry D."/>
            <person name="Moore M.J.F."/>
            <person name="Mullikin J.C."/>
            <person name="Nickerson T."/>
            <person name="Oliver K."/>
            <person name="Parker A."/>
            <person name="Patel R."/>
            <person name="Pearce T.A.V."/>
            <person name="Peck A.I."/>
            <person name="Phillimore B.J.C.T."/>
            <person name="Prathalingam S.R."/>
            <person name="Plumb R.W."/>
            <person name="Ramsay H."/>
            <person name="Rice C.M."/>
            <person name="Ross M.T."/>
            <person name="Scott C.E."/>
            <person name="Sehra H.K."/>
            <person name="Shownkeen R."/>
            <person name="Sims S."/>
            <person name="Skuce C.D."/>
            <person name="Smith M.L."/>
            <person name="Soderlund C."/>
            <person name="Steward C.A."/>
            <person name="Sulston J.E."/>
            <person name="Swann R.M."/>
            <person name="Sycamore N."/>
            <person name="Taylor R."/>
            <person name="Tee L."/>
            <person name="Thomas D.W."/>
            <person name="Thorpe A."/>
            <person name="Tracey A."/>
            <person name="Tromans A.C."/>
            <person name="Vaudin M."/>
            <person name="Wall M."/>
            <person name="Wallis J.M."/>
            <person name="Whitehead S.L."/>
            <person name="Whittaker P."/>
            <person name="Willey D.L."/>
            <person name="Williams L."/>
            <person name="Williams S.A."/>
            <person name="Wilming L."/>
            <person name="Wray P.W."/>
            <person name="Hubbard T."/>
            <person name="Durbin R.M."/>
            <person name="Bentley D.R."/>
            <person name="Beck S."/>
            <person name="Rogers J."/>
        </authorList>
    </citation>
    <scope>NUCLEOTIDE SEQUENCE [LARGE SCALE GENOMIC DNA]</scope>
</reference>
<reference key="6">
    <citation type="submission" date="2005-09" db="EMBL/GenBank/DDBJ databases">
        <authorList>
            <person name="Mural R.J."/>
            <person name="Istrail S."/>
            <person name="Sutton G.G."/>
            <person name="Florea L."/>
            <person name="Halpern A.L."/>
            <person name="Mobarry C.M."/>
            <person name="Lippert R."/>
            <person name="Walenz B."/>
            <person name="Shatkay H."/>
            <person name="Dew I."/>
            <person name="Miller J.R."/>
            <person name="Flanigan M.J."/>
            <person name="Edwards N.J."/>
            <person name="Bolanos R."/>
            <person name="Fasulo D."/>
            <person name="Halldorsson B.V."/>
            <person name="Hannenhalli S."/>
            <person name="Turner R."/>
            <person name="Yooseph S."/>
            <person name="Lu F."/>
            <person name="Nusskern D.R."/>
            <person name="Shue B.C."/>
            <person name="Zheng X.H."/>
            <person name="Zhong F."/>
            <person name="Delcher A.L."/>
            <person name="Huson D.H."/>
            <person name="Kravitz S.A."/>
            <person name="Mouchard L."/>
            <person name="Reinert K."/>
            <person name="Remington K.A."/>
            <person name="Clark A.G."/>
            <person name="Waterman M.S."/>
            <person name="Eichler E.E."/>
            <person name="Adams M.D."/>
            <person name="Hunkapiller M.W."/>
            <person name="Myers E.W."/>
            <person name="Venter J.C."/>
        </authorList>
    </citation>
    <scope>NUCLEOTIDE SEQUENCE [LARGE SCALE GENOMIC DNA]</scope>
</reference>
<reference key="7">
    <citation type="journal article" date="2004" name="Genome Res.">
        <title>The status, quality, and expansion of the NIH full-length cDNA project: the Mammalian Gene Collection (MGC).</title>
        <authorList>
            <consortium name="The MGC Project Team"/>
        </authorList>
    </citation>
    <scope>NUCLEOTIDE SEQUENCE [LARGE SCALE MRNA]</scope>
    <source>
        <tissue>Liver</tissue>
    </source>
</reference>
<reference key="8">
    <citation type="journal article" date="2003" name="Diabetes">
        <title>Genetic variation of the GLUT10 glucose transporter (SLC2A10) and relationships to type 2 diabetes and intermediary traits.</title>
        <authorList>
            <person name="Andersen G."/>
            <person name="Rose C.S."/>
            <person name="Hamid Y.H."/>
            <person name="Drivsholm T."/>
            <person name="Borch-Johnsen K."/>
            <person name="Hansen T."/>
            <person name="Pedersen O."/>
        </authorList>
    </citation>
    <scope>ASSOCIATION OF VARIANT THR-206 WITH LOWER SERUM INSULIN LEVEL</scope>
</reference>
<reference key="9">
    <citation type="journal article" date="2006" name="Nat. Genet.">
        <title>Mutations in the facilitative glucose transporter GLUT10 alter angiogenesis and cause arterial tortuosity syndrome.</title>
        <authorList>
            <person name="Coucke P.J."/>
            <person name="Willaert A."/>
            <person name="Wessels M.W."/>
            <person name="Callewaert B."/>
            <person name="Zoppi N."/>
            <person name="De Backer J."/>
            <person name="Fox J.E."/>
            <person name="Mancini G.M.S."/>
            <person name="Kambouris M."/>
            <person name="Gardella R."/>
            <person name="Facchetti F."/>
            <person name="Willems P.J."/>
            <person name="Forsyth R."/>
            <person name="Dietz H.C."/>
            <person name="Barlati S."/>
            <person name="Colombi M."/>
            <person name="Loeys B."/>
            <person name="De Paepe A."/>
        </authorList>
    </citation>
    <scope>VARIANT ATORS ARG-81</scope>
    <scope>SUBCELLULAR LOCATION</scope>
    <scope>FUNCTION</scope>
</reference>
<reference key="10">
    <citation type="journal article" date="2008" name="Hum. Mutat.">
        <title>Arterial tortuosity syndrome: clinical and molecular findings in 12 newly identified families.</title>
        <authorList>
            <person name="Callewaert B.L."/>
            <person name="Willaert A."/>
            <person name="Kerstjens-Frederikse W.S."/>
            <person name="De Backer J."/>
            <person name="Devriendt K."/>
            <person name="Albrecht B."/>
            <person name="Ramos-Arroyo M.A."/>
            <person name="Doco-Fenzy M."/>
            <person name="Hennekam R.C.M."/>
            <person name="Pyeritz R.E."/>
            <person name="Krogmann O.N."/>
            <person name="Gillessen-kaesbach G."/>
            <person name="Wakeling E.L."/>
            <person name="Nik-zainal S."/>
            <person name="Francannet C."/>
            <person name="Mauran P."/>
            <person name="Booth C."/>
            <person name="Barrow M."/>
            <person name="Dekens R."/>
            <person name="Loeys B.L."/>
            <person name="Coucke P.J."/>
            <person name="De Paepe A.M."/>
        </authorList>
    </citation>
    <scope>VARIANTS ATORS TRP-132; VAL-142; GLN-231; GLU-246; TRP-426; LYS-437 AND GLU-445</scope>
</reference>
<keyword id="KW-0963">Cytoplasm</keyword>
<keyword id="KW-0225">Disease variant</keyword>
<keyword id="KW-0325">Glycoprotein</keyword>
<keyword id="KW-0472">Membrane</keyword>
<keyword id="KW-1267">Proteomics identification</keyword>
<keyword id="KW-1185">Reference proteome</keyword>
<keyword id="KW-0762">Sugar transport</keyword>
<keyword id="KW-0812">Transmembrane</keyword>
<keyword id="KW-1133">Transmembrane helix</keyword>
<keyword id="KW-0813">Transport</keyword>
<gene>
    <name evidence="8 10" type="primary">SLC2A10</name>
    <name evidence="8" type="synonym">GLUT10</name>
</gene>